<evidence type="ECO:0000305" key="1"/>
<keyword id="KW-1185">Reference proteome</keyword>
<sequence length="481" mass="53732">MQLQSYDPGNFYDELFFAPGQPRPQAAPLIDWMGQLSPEILRQHHETAQIALFNLGVTFRVYNDDQGVERIFPVDIIPRIIAEAEWRSLEKGLKQRIKALNCFLTDIYGPQNIVKDGIVPLDIVESASGFLKPCIGIKPPAGVWCHITGTDLVRDGAGKWFVLEDNLRVPSGISYVLENRRVMKSTFPDMFQTIPIQPVDSYPSQLLETLLNLAPPHLAAPVVVVLTPGINNSAYFEHSFLAQQMGVELVEGRDLVVADGYLQMRTTKGLQRVDVVYRRLDDDFIDPEVFRPDSLLGVPGLMEVYRQGRVALANAPGTGVADDKVIYAYVPEMINYYLKEEPLLANVPTYLCWREEDRNYVLDHLAELVVKSANEAGGYGMLMGPSASPQERAQFAERIRHNPRNYIAQPVLNLSRVPTLIGDQVEGRHVDLRPYILNRGDEIYVHPGGLTRVALRKGSLVVNSSQGGGSKDTWVLQGSTQ</sequence>
<proteinExistence type="predicted"/>
<feature type="chain" id="PRO_0000157870" description="Uncharacterized protein sll0335">
    <location>
        <begin position="1"/>
        <end position="481"/>
    </location>
</feature>
<name>Y335_SYNY3</name>
<dbReference type="EMBL" id="S77740">
    <property type="protein sequence ID" value="AAC60396.1"/>
    <property type="status" value="ALT_FRAME"/>
    <property type="molecule type" value="Genomic_DNA"/>
</dbReference>
<dbReference type="EMBL" id="S77740">
    <property type="protein sequence ID" value="AAC60397.1"/>
    <property type="status" value="ALT_FRAME"/>
    <property type="molecule type" value="Genomic_DNA"/>
</dbReference>
<dbReference type="EMBL" id="D10004">
    <property type="protein sequence ID" value="BAA00891.1"/>
    <property type="status" value="ALT_FRAME"/>
    <property type="molecule type" value="Genomic_DNA"/>
</dbReference>
<dbReference type="EMBL" id="D10004">
    <property type="protein sequence ID" value="BAA00892.1"/>
    <property type="status" value="ALT_FRAME"/>
    <property type="molecule type" value="Genomic_DNA"/>
</dbReference>
<dbReference type="EMBL" id="BA000022">
    <property type="protein sequence ID" value="BAA10093.1"/>
    <property type="molecule type" value="Genomic_DNA"/>
</dbReference>
<dbReference type="PIR" id="S76115">
    <property type="entry name" value="S76115"/>
</dbReference>
<dbReference type="SMR" id="Q55587"/>
<dbReference type="STRING" id="1148.gene:10499585"/>
<dbReference type="PaxDb" id="1148-1001467"/>
<dbReference type="EnsemblBacteria" id="BAA10093">
    <property type="protein sequence ID" value="BAA10093"/>
    <property type="gene ID" value="BAA10093"/>
</dbReference>
<dbReference type="KEGG" id="syn:sll0335"/>
<dbReference type="eggNOG" id="COG2308">
    <property type="taxonomic scope" value="Bacteria"/>
</dbReference>
<dbReference type="InParanoid" id="Q55587"/>
<dbReference type="PhylomeDB" id="Q55587"/>
<dbReference type="Proteomes" id="UP000001425">
    <property type="component" value="Chromosome"/>
</dbReference>
<dbReference type="Gene3D" id="3.30.1490.270">
    <property type="match status" value="1"/>
</dbReference>
<dbReference type="Gene3D" id="3.40.50.11290">
    <property type="match status" value="1"/>
</dbReference>
<dbReference type="InterPro" id="IPR051680">
    <property type="entry name" value="ATP-dep_Glu-Cys_Ligase-2"/>
</dbReference>
<dbReference type="InterPro" id="IPR025841">
    <property type="entry name" value="CP_ATPgrasp_2"/>
</dbReference>
<dbReference type="InterPro" id="IPR016450">
    <property type="entry name" value="UCP005522"/>
</dbReference>
<dbReference type="PANTHER" id="PTHR34595">
    <property type="entry name" value="BLR5612 PROTEIN"/>
    <property type="match status" value="1"/>
</dbReference>
<dbReference type="PANTHER" id="PTHR34595:SF7">
    <property type="entry name" value="SLL1039 PROTEIN"/>
    <property type="match status" value="1"/>
</dbReference>
<dbReference type="Pfam" id="PF14403">
    <property type="entry name" value="CP_ATPgrasp_2"/>
    <property type="match status" value="1"/>
</dbReference>
<dbReference type="PIRSF" id="PIRSF005522">
    <property type="entry name" value="UCP005522"/>
    <property type="match status" value="1"/>
</dbReference>
<dbReference type="SUPFAM" id="SSF56059">
    <property type="entry name" value="Glutathione synthetase ATP-binding domain-like"/>
    <property type="match status" value="1"/>
</dbReference>
<comment type="similarity">
    <text evidence="1">To M.tuberculosis RV2411c.</text>
</comment>
<comment type="sequence caution" evidence="1">
    <conflict type="frameshift">
        <sequence resource="EMBL-CDS" id="BAA00892"/>
    </conflict>
</comment>
<accession>Q55587</accession>
<accession>Q57032</accession>
<accession>Q57054</accession>
<accession>Q79F81</accession>
<accession>Q79F82</accession>
<gene>
    <name type="ordered locus">sll0335</name>
</gene>
<protein>
    <recommendedName>
        <fullName>Uncharacterized protein sll0335</fullName>
    </recommendedName>
</protein>
<reference key="1">
    <citation type="journal article" date="1991" name="Agric. Biol. Chem.">
        <title>Gene encoding a putative zinc finger protein in Synechocystis PCC6803.</title>
        <authorList>
            <person name="Ogura Y."/>
            <person name="Yoshida T."/>
            <person name="Nakamura Y."/>
            <person name="Takemura M."/>
            <person name="Oda K."/>
            <person name="Ohyama K."/>
        </authorList>
    </citation>
    <scope>NUCLEOTIDE SEQUENCE [GENOMIC DNA]</scope>
</reference>
<reference key="2">
    <citation type="journal article" date="1995" name="DNA Res.">
        <title>Sequence analysis of the genome of the unicellular cyanobacterium Synechocystis sp. strain PCC6803. I. Sequence features in the 1 Mb region from map positions 64% to 92% of the genome.</title>
        <authorList>
            <person name="Kaneko T."/>
            <person name="Tanaka A."/>
            <person name="Sato S."/>
            <person name="Kotani H."/>
            <person name="Sazuka T."/>
            <person name="Miyajima N."/>
            <person name="Sugiura M."/>
            <person name="Tabata S."/>
        </authorList>
    </citation>
    <scope>NUCLEOTIDE SEQUENCE [LARGE SCALE GENOMIC DNA]</scope>
    <source>
        <strain>ATCC 27184 / PCC 6803 / N-1</strain>
    </source>
</reference>
<reference key="3">
    <citation type="journal article" date="1996" name="DNA Res.">
        <title>Sequence analysis of the genome of the unicellular cyanobacterium Synechocystis sp. strain PCC6803. II. Sequence determination of the entire genome and assignment of potential protein-coding regions.</title>
        <authorList>
            <person name="Kaneko T."/>
            <person name="Sato S."/>
            <person name="Kotani H."/>
            <person name="Tanaka A."/>
            <person name="Asamizu E."/>
            <person name="Nakamura Y."/>
            <person name="Miyajima N."/>
            <person name="Hirosawa M."/>
            <person name="Sugiura M."/>
            <person name="Sasamoto S."/>
            <person name="Kimura T."/>
            <person name="Hosouchi T."/>
            <person name="Matsuno A."/>
            <person name="Muraki A."/>
            <person name="Nakazaki N."/>
            <person name="Naruo K."/>
            <person name="Okumura S."/>
            <person name="Shimpo S."/>
            <person name="Takeuchi C."/>
            <person name="Wada T."/>
            <person name="Watanabe A."/>
            <person name="Yamada M."/>
            <person name="Yasuda M."/>
            <person name="Tabata S."/>
        </authorList>
    </citation>
    <scope>NUCLEOTIDE SEQUENCE [LARGE SCALE GENOMIC DNA]</scope>
    <source>
        <strain>ATCC 27184 / PCC 6803 / Kazusa</strain>
    </source>
</reference>
<organism>
    <name type="scientific">Synechocystis sp. (strain ATCC 27184 / PCC 6803 / Kazusa)</name>
    <dbReference type="NCBI Taxonomy" id="1111708"/>
    <lineage>
        <taxon>Bacteria</taxon>
        <taxon>Bacillati</taxon>
        <taxon>Cyanobacteriota</taxon>
        <taxon>Cyanophyceae</taxon>
        <taxon>Synechococcales</taxon>
        <taxon>Merismopediaceae</taxon>
        <taxon>Synechocystis</taxon>
    </lineage>
</organism>